<protein>
    <recommendedName>
        <fullName>UPF0213 protein lin0209</fullName>
    </recommendedName>
</protein>
<evidence type="ECO:0000255" key="1">
    <source>
        <dbReference type="PROSITE-ProRule" id="PRU00977"/>
    </source>
</evidence>
<evidence type="ECO:0000305" key="2"/>
<name>Y209_LISIN</name>
<feature type="chain" id="PRO_0000161366" description="UPF0213 protein lin0209">
    <location>
        <begin position="1"/>
        <end position="90"/>
    </location>
</feature>
<feature type="domain" description="GIY-YIG" evidence="1">
    <location>
        <begin position="5"/>
        <end position="80"/>
    </location>
</feature>
<gene>
    <name type="ordered locus">lin0209</name>
</gene>
<comment type="similarity">
    <text evidence="2">Belongs to the UPF0213 family.</text>
</comment>
<organism>
    <name type="scientific">Listeria innocua serovar 6a (strain ATCC BAA-680 / CLIP 11262)</name>
    <dbReference type="NCBI Taxonomy" id="272626"/>
    <lineage>
        <taxon>Bacteria</taxon>
        <taxon>Bacillati</taxon>
        <taxon>Bacillota</taxon>
        <taxon>Bacilli</taxon>
        <taxon>Bacillales</taxon>
        <taxon>Listeriaceae</taxon>
        <taxon>Listeria</taxon>
    </lineage>
</organism>
<sequence>MAKANEHFFYVLKCSDNSYYGGYTTDVMRREAEHNAGIRCKYTKTRRPVKVIHFEKFETRSEATKAEAAFKKLSRKNKDSYLSEREEESK</sequence>
<reference key="1">
    <citation type="journal article" date="2001" name="Science">
        <title>Comparative genomics of Listeria species.</title>
        <authorList>
            <person name="Glaser P."/>
            <person name="Frangeul L."/>
            <person name="Buchrieser C."/>
            <person name="Rusniok C."/>
            <person name="Amend A."/>
            <person name="Baquero F."/>
            <person name="Berche P."/>
            <person name="Bloecker H."/>
            <person name="Brandt P."/>
            <person name="Chakraborty T."/>
            <person name="Charbit A."/>
            <person name="Chetouani F."/>
            <person name="Couve E."/>
            <person name="de Daruvar A."/>
            <person name="Dehoux P."/>
            <person name="Domann E."/>
            <person name="Dominguez-Bernal G."/>
            <person name="Duchaud E."/>
            <person name="Durant L."/>
            <person name="Dussurget O."/>
            <person name="Entian K.-D."/>
            <person name="Fsihi H."/>
            <person name="Garcia-del Portillo F."/>
            <person name="Garrido P."/>
            <person name="Gautier L."/>
            <person name="Goebel W."/>
            <person name="Gomez-Lopez N."/>
            <person name="Hain T."/>
            <person name="Hauf J."/>
            <person name="Jackson D."/>
            <person name="Jones L.-M."/>
            <person name="Kaerst U."/>
            <person name="Kreft J."/>
            <person name="Kuhn M."/>
            <person name="Kunst F."/>
            <person name="Kurapkat G."/>
            <person name="Madueno E."/>
            <person name="Maitournam A."/>
            <person name="Mata Vicente J."/>
            <person name="Ng E."/>
            <person name="Nedjari H."/>
            <person name="Nordsiek G."/>
            <person name="Novella S."/>
            <person name="de Pablos B."/>
            <person name="Perez-Diaz J.-C."/>
            <person name="Purcell R."/>
            <person name="Remmel B."/>
            <person name="Rose M."/>
            <person name="Schlueter T."/>
            <person name="Simoes N."/>
            <person name="Tierrez A."/>
            <person name="Vazquez-Boland J.-A."/>
            <person name="Voss H."/>
            <person name="Wehland J."/>
            <person name="Cossart P."/>
        </authorList>
    </citation>
    <scope>NUCLEOTIDE SEQUENCE [LARGE SCALE GENOMIC DNA]</scope>
    <source>
        <strain>ATCC BAA-680 / CLIP 11262</strain>
    </source>
</reference>
<dbReference type="EMBL" id="AL596163">
    <property type="protein sequence ID" value="CAC95442.1"/>
    <property type="molecule type" value="Genomic_DNA"/>
</dbReference>
<dbReference type="PIR" id="AB1459">
    <property type="entry name" value="AB1459"/>
</dbReference>
<dbReference type="RefSeq" id="WP_010990277.1">
    <property type="nucleotide sequence ID" value="NC_003212.1"/>
</dbReference>
<dbReference type="SMR" id="Q92F97"/>
<dbReference type="STRING" id="272626.gene:17564521"/>
<dbReference type="KEGG" id="lin:lin0209"/>
<dbReference type="eggNOG" id="COG2827">
    <property type="taxonomic scope" value="Bacteria"/>
</dbReference>
<dbReference type="HOGENOM" id="CLU_135650_0_3_9"/>
<dbReference type="OrthoDB" id="9807770at2"/>
<dbReference type="Proteomes" id="UP000002513">
    <property type="component" value="Chromosome"/>
</dbReference>
<dbReference type="CDD" id="cd10456">
    <property type="entry name" value="GIY-YIG_UPF0213"/>
    <property type="match status" value="1"/>
</dbReference>
<dbReference type="Gene3D" id="3.40.1440.10">
    <property type="entry name" value="GIY-YIG endonuclease"/>
    <property type="match status" value="1"/>
</dbReference>
<dbReference type="InterPro" id="IPR000305">
    <property type="entry name" value="GIY-YIG_endonuc"/>
</dbReference>
<dbReference type="InterPro" id="IPR035901">
    <property type="entry name" value="GIY-YIG_endonuc_sf"/>
</dbReference>
<dbReference type="InterPro" id="IPR050190">
    <property type="entry name" value="UPF0213_domain"/>
</dbReference>
<dbReference type="PANTHER" id="PTHR34477">
    <property type="entry name" value="UPF0213 PROTEIN YHBQ"/>
    <property type="match status" value="1"/>
</dbReference>
<dbReference type="PANTHER" id="PTHR34477:SF1">
    <property type="entry name" value="UPF0213 PROTEIN YHBQ"/>
    <property type="match status" value="1"/>
</dbReference>
<dbReference type="Pfam" id="PF01541">
    <property type="entry name" value="GIY-YIG"/>
    <property type="match status" value="1"/>
</dbReference>
<dbReference type="SUPFAM" id="SSF82771">
    <property type="entry name" value="GIY-YIG endonuclease"/>
    <property type="match status" value="1"/>
</dbReference>
<dbReference type="PROSITE" id="PS50164">
    <property type="entry name" value="GIY_YIG"/>
    <property type="match status" value="1"/>
</dbReference>
<proteinExistence type="inferred from homology"/>
<accession>Q92F97</accession>